<protein>
    <recommendedName>
        <fullName evidence="1">DNA-directed RNA polymerase subunit omega</fullName>
        <shortName evidence="1">RNAP omega subunit</shortName>
        <ecNumber evidence="1">2.7.7.6</ecNumber>
    </recommendedName>
    <alternativeName>
        <fullName evidence="1">RNA polymerase omega subunit</fullName>
    </alternativeName>
    <alternativeName>
        <fullName evidence="1">Transcriptase subunit omega</fullName>
    </alternativeName>
</protein>
<organism>
    <name type="scientific">Streptococcus pneumoniae (strain 70585)</name>
    <dbReference type="NCBI Taxonomy" id="488221"/>
    <lineage>
        <taxon>Bacteria</taxon>
        <taxon>Bacillati</taxon>
        <taxon>Bacillota</taxon>
        <taxon>Bacilli</taxon>
        <taxon>Lactobacillales</taxon>
        <taxon>Streptococcaceae</taxon>
        <taxon>Streptococcus</taxon>
    </lineage>
</organism>
<name>RPOZ_STRP7</name>
<evidence type="ECO:0000255" key="1">
    <source>
        <dbReference type="HAMAP-Rule" id="MF_00366"/>
    </source>
</evidence>
<evidence type="ECO:0000256" key="2">
    <source>
        <dbReference type="SAM" id="MobiDB-lite"/>
    </source>
</evidence>
<reference key="1">
    <citation type="journal article" date="2010" name="Genome Biol.">
        <title>Structure and dynamics of the pan-genome of Streptococcus pneumoniae and closely related species.</title>
        <authorList>
            <person name="Donati C."/>
            <person name="Hiller N.L."/>
            <person name="Tettelin H."/>
            <person name="Muzzi A."/>
            <person name="Croucher N.J."/>
            <person name="Angiuoli S.V."/>
            <person name="Oggioni M."/>
            <person name="Dunning Hotopp J.C."/>
            <person name="Hu F.Z."/>
            <person name="Riley D.R."/>
            <person name="Covacci A."/>
            <person name="Mitchell T.J."/>
            <person name="Bentley S.D."/>
            <person name="Kilian M."/>
            <person name="Ehrlich G.D."/>
            <person name="Rappuoli R."/>
            <person name="Moxon E.R."/>
            <person name="Masignani V."/>
        </authorList>
    </citation>
    <scope>NUCLEOTIDE SEQUENCE [LARGE SCALE GENOMIC DNA]</scope>
    <source>
        <strain>70585</strain>
    </source>
</reference>
<gene>
    <name evidence="1" type="primary">rpoZ</name>
    <name type="ordered locus">SP70585_1777</name>
</gene>
<feature type="chain" id="PRO_1000194813" description="DNA-directed RNA polymerase subunit omega">
    <location>
        <begin position="1"/>
        <end position="103"/>
    </location>
</feature>
<feature type="region of interest" description="Disordered" evidence="2">
    <location>
        <begin position="52"/>
        <end position="103"/>
    </location>
</feature>
<feature type="compositionally biased region" description="Basic and acidic residues" evidence="2">
    <location>
        <begin position="62"/>
        <end position="103"/>
    </location>
</feature>
<proteinExistence type="inferred from homology"/>
<dbReference type="EC" id="2.7.7.6" evidence="1"/>
<dbReference type="EMBL" id="CP000918">
    <property type="protein sequence ID" value="ACO16299.1"/>
    <property type="molecule type" value="Genomic_DNA"/>
</dbReference>
<dbReference type="SMR" id="C1C8X4"/>
<dbReference type="KEGG" id="snm:SP70585_1777"/>
<dbReference type="HOGENOM" id="CLU_125406_0_0_9"/>
<dbReference type="Proteomes" id="UP000002211">
    <property type="component" value="Chromosome"/>
</dbReference>
<dbReference type="GO" id="GO:0000428">
    <property type="term" value="C:DNA-directed RNA polymerase complex"/>
    <property type="evidence" value="ECO:0007669"/>
    <property type="project" value="UniProtKB-KW"/>
</dbReference>
<dbReference type="GO" id="GO:0003677">
    <property type="term" value="F:DNA binding"/>
    <property type="evidence" value="ECO:0007669"/>
    <property type="project" value="UniProtKB-UniRule"/>
</dbReference>
<dbReference type="GO" id="GO:0003899">
    <property type="term" value="F:DNA-directed RNA polymerase activity"/>
    <property type="evidence" value="ECO:0007669"/>
    <property type="project" value="UniProtKB-UniRule"/>
</dbReference>
<dbReference type="GO" id="GO:0006351">
    <property type="term" value="P:DNA-templated transcription"/>
    <property type="evidence" value="ECO:0007669"/>
    <property type="project" value="UniProtKB-UniRule"/>
</dbReference>
<dbReference type="Gene3D" id="3.90.940.10">
    <property type="match status" value="1"/>
</dbReference>
<dbReference type="HAMAP" id="MF_00366">
    <property type="entry name" value="RNApol_bact_RpoZ"/>
    <property type="match status" value="1"/>
</dbReference>
<dbReference type="InterPro" id="IPR003716">
    <property type="entry name" value="DNA-dir_RNA_pol_omega"/>
</dbReference>
<dbReference type="InterPro" id="IPR006110">
    <property type="entry name" value="Pol_omega/Rpo6/RPB6"/>
</dbReference>
<dbReference type="InterPro" id="IPR036161">
    <property type="entry name" value="RPB6/omega-like_sf"/>
</dbReference>
<dbReference type="NCBIfam" id="TIGR00690">
    <property type="entry name" value="rpoZ"/>
    <property type="match status" value="1"/>
</dbReference>
<dbReference type="PANTHER" id="PTHR34476">
    <property type="entry name" value="DNA-DIRECTED RNA POLYMERASE SUBUNIT OMEGA"/>
    <property type="match status" value="1"/>
</dbReference>
<dbReference type="PANTHER" id="PTHR34476:SF1">
    <property type="entry name" value="DNA-DIRECTED RNA POLYMERASE SUBUNIT OMEGA"/>
    <property type="match status" value="1"/>
</dbReference>
<dbReference type="Pfam" id="PF01192">
    <property type="entry name" value="RNA_pol_Rpb6"/>
    <property type="match status" value="1"/>
</dbReference>
<dbReference type="SMART" id="SM01409">
    <property type="entry name" value="RNA_pol_Rpb6"/>
    <property type="match status" value="1"/>
</dbReference>
<dbReference type="SUPFAM" id="SSF63562">
    <property type="entry name" value="RPB6/omega subunit-like"/>
    <property type="match status" value="1"/>
</dbReference>
<accession>C1C8X4</accession>
<sequence length="103" mass="11792">MLKPSIDTLLDKVPSKYSLVILEAKRAHELEAGAPATQGFKSEKSTLRALEEIESGNVTIHPDPEGKREAVRRRIEEEKRRKEEEEKKIKEQIAKEKEDGEKI</sequence>
<comment type="function">
    <text evidence="1">Promotes RNA polymerase assembly. Latches the N- and C-terminal regions of the beta' subunit thereby facilitating its interaction with the beta and alpha subunits.</text>
</comment>
<comment type="catalytic activity">
    <reaction evidence="1">
        <text>RNA(n) + a ribonucleoside 5'-triphosphate = RNA(n+1) + diphosphate</text>
        <dbReference type="Rhea" id="RHEA:21248"/>
        <dbReference type="Rhea" id="RHEA-COMP:14527"/>
        <dbReference type="Rhea" id="RHEA-COMP:17342"/>
        <dbReference type="ChEBI" id="CHEBI:33019"/>
        <dbReference type="ChEBI" id="CHEBI:61557"/>
        <dbReference type="ChEBI" id="CHEBI:140395"/>
        <dbReference type="EC" id="2.7.7.6"/>
    </reaction>
</comment>
<comment type="subunit">
    <text evidence="1">The RNAP catalytic core consists of 2 alpha, 1 beta, 1 beta' and 1 omega subunit. When a sigma factor is associated with the core the holoenzyme is formed, which can initiate transcription.</text>
</comment>
<comment type="similarity">
    <text evidence="1">Belongs to the RNA polymerase subunit omega family.</text>
</comment>
<keyword id="KW-0240">DNA-directed RNA polymerase</keyword>
<keyword id="KW-0548">Nucleotidyltransferase</keyword>
<keyword id="KW-0804">Transcription</keyword>
<keyword id="KW-0808">Transferase</keyword>